<dbReference type="EMBL" id="U82664">
    <property type="protein sequence ID" value="AAB40245.1"/>
    <property type="status" value="ALT_INIT"/>
    <property type="molecule type" value="Genomic_DNA"/>
</dbReference>
<dbReference type="EMBL" id="U00096">
    <property type="protein sequence ID" value="AAC73593.2"/>
    <property type="molecule type" value="Genomic_DNA"/>
</dbReference>
<dbReference type="EMBL" id="AP009048">
    <property type="protein sequence ID" value="BAE76270.1"/>
    <property type="molecule type" value="Genomic_DNA"/>
</dbReference>
<dbReference type="RefSeq" id="NP_415024.4">
    <property type="nucleotide sequence ID" value="NC_000913.3"/>
</dbReference>
<dbReference type="RefSeq" id="WP_001295323.1">
    <property type="nucleotide sequence ID" value="NZ_SSZK01000009.1"/>
</dbReference>
<dbReference type="BioGRID" id="4259852">
    <property type="interactions" value="254"/>
</dbReference>
<dbReference type="FunCoup" id="P77307">
    <property type="interactions" value="177"/>
</dbReference>
<dbReference type="STRING" id="511145.b0491"/>
<dbReference type="TCDB" id="3.A.1.139.2">
    <property type="family name" value="the atp-binding cassette (abc) superfamily"/>
</dbReference>
<dbReference type="jPOST" id="P77307"/>
<dbReference type="PaxDb" id="511145-b0491"/>
<dbReference type="EnsemblBacteria" id="AAC73593">
    <property type="protein sequence ID" value="AAC73593"/>
    <property type="gene ID" value="b0491"/>
</dbReference>
<dbReference type="GeneID" id="93776958"/>
<dbReference type="GeneID" id="945137"/>
<dbReference type="KEGG" id="ecj:JW5066"/>
<dbReference type="KEGG" id="eco:b0491"/>
<dbReference type="KEGG" id="ecoc:C3026_02415"/>
<dbReference type="PATRIC" id="fig|511145.12.peg.512"/>
<dbReference type="EchoBASE" id="EB3048"/>
<dbReference type="eggNOG" id="COG0390">
    <property type="taxonomic scope" value="Bacteria"/>
</dbReference>
<dbReference type="HOGENOM" id="CLU_076147_1_0_6"/>
<dbReference type="InParanoid" id="P77307"/>
<dbReference type="OMA" id="PWYEPQY"/>
<dbReference type="OrthoDB" id="9791807at2"/>
<dbReference type="PhylomeDB" id="P77307"/>
<dbReference type="BioCyc" id="EcoCyc:G6267-MONOMER"/>
<dbReference type="PRO" id="PR:P77307"/>
<dbReference type="Proteomes" id="UP000000625">
    <property type="component" value="Chromosome"/>
</dbReference>
<dbReference type="GO" id="GO:0005886">
    <property type="term" value="C:plasma membrane"/>
    <property type="evidence" value="ECO:0000314"/>
    <property type="project" value="EcoCyc"/>
</dbReference>
<dbReference type="GO" id="GO:0006879">
    <property type="term" value="P:intracellular iron ion homeostasis"/>
    <property type="evidence" value="ECO:0000315"/>
    <property type="project" value="EcoCyc"/>
</dbReference>
<dbReference type="GO" id="GO:0006826">
    <property type="term" value="P:iron ion transport"/>
    <property type="evidence" value="ECO:0007669"/>
    <property type="project" value="UniProtKB-KW"/>
</dbReference>
<dbReference type="InterPro" id="IPR056728">
    <property type="entry name" value="FetB"/>
</dbReference>
<dbReference type="InterPro" id="IPR005226">
    <property type="entry name" value="UPF0014_fam"/>
</dbReference>
<dbReference type="NCBIfam" id="TIGR00245">
    <property type="entry name" value="iron efflux ABC transporter permease subunit FetB"/>
    <property type="match status" value="1"/>
</dbReference>
<dbReference type="PANTHER" id="PTHR30028:SF0">
    <property type="entry name" value="PROTEIN ALUMINUM SENSITIVE 3"/>
    <property type="match status" value="1"/>
</dbReference>
<dbReference type="PANTHER" id="PTHR30028">
    <property type="entry name" value="UPF0014 INNER MEMBRANE PROTEIN YBBM-RELATED"/>
    <property type="match status" value="1"/>
</dbReference>
<dbReference type="Pfam" id="PF03649">
    <property type="entry name" value="UPF0014"/>
    <property type="match status" value="1"/>
</dbReference>
<reference key="1">
    <citation type="submission" date="1997-01" db="EMBL/GenBank/DDBJ databases">
        <title>Sequence of minutes 4-25 of Escherichia coli.</title>
        <authorList>
            <person name="Chung E."/>
            <person name="Allen E."/>
            <person name="Araujo R."/>
            <person name="Aparicio A.M."/>
            <person name="Davis K."/>
            <person name="Duncan M."/>
            <person name="Federspiel N."/>
            <person name="Hyman R."/>
            <person name="Kalman S."/>
            <person name="Komp C."/>
            <person name="Kurdi O."/>
            <person name="Lew H."/>
            <person name="Lin D."/>
            <person name="Namath A."/>
            <person name="Oefner P."/>
            <person name="Roberts D."/>
            <person name="Schramm S."/>
            <person name="Davis R.W."/>
        </authorList>
    </citation>
    <scope>NUCLEOTIDE SEQUENCE [LARGE SCALE GENOMIC DNA]</scope>
    <source>
        <strain>K12 / MG1655 / ATCC 47076</strain>
    </source>
</reference>
<reference key="2">
    <citation type="journal article" date="1997" name="Science">
        <title>The complete genome sequence of Escherichia coli K-12.</title>
        <authorList>
            <person name="Blattner F.R."/>
            <person name="Plunkett G. III"/>
            <person name="Bloch C.A."/>
            <person name="Perna N.T."/>
            <person name="Burland V."/>
            <person name="Riley M."/>
            <person name="Collado-Vides J."/>
            <person name="Glasner J.D."/>
            <person name="Rode C.K."/>
            <person name="Mayhew G.F."/>
            <person name="Gregor J."/>
            <person name="Davis N.W."/>
            <person name="Kirkpatrick H.A."/>
            <person name="Goeden M.A."/>
            <person name="Rose D.J."/>
            <person name="Mau B."/>
            <person name="Shao Y."/>
        </authorList>
    </citation>
    <scope>NUCLEOTIDE SEQUENCE [LARGE SCALE GENOMIC DNA]</scope>
    <source>
        <strain>K12 / MG1655 / ATCC 47076</strain>
    </source>
</reference>
<reference key="3">
    <citation type="journal article" date="2006" name="Mol. Syst. Biol.">
        <title>Highly accurate genome sequences of Escherichia coli K-12 strains MG1655 and W3110.</title>
        <authorList>
            <person name="Hayashi K."/>
            <person name="Morooka N."/>
            <person name="Yamamoto Y."/>
            <person name="Fujita K."/>
            <person name="Isono K."/>
            <person name="Choi S."/>
            <person name="Ohtsubo E."/>
            <person name="Baba T."/>
            <person name="Wanner B.L."/>
            <person name="Mori H."/>
            <person name="Horiuchi T."/>
        </authorList>
    </citation>
    <scope>NUCLEOTIDE SEQUENCE [LARGE SCALE GENOMIC DNA]</scope>
    <source>
        <strain>K12 / W3110 / ATCC 27325 / DSM 5911</strain>
    </source>
</reference>
<reference key="4">
    <citation type="journal article" date="2005" name="Science">
        <title>Global topology analysis of the Escherichia coli inner membrane proteome.</title>
        <authorList>
            <person name="Daley D.O."/>
            <person name="Rapp M."/>
            <person name="Granseth E."/>
            <person name="Melen K."/>
            <person name="Drew D."/>
            <person name="von Heijne G."/>
        </authorList>
    </citation>
    <scope>TOPOLOGY [LARGE SCALE ANALYSIS]</scope>
    <source>
        <strain>K12 / MG1655 / ATCC 47076</strain>
    </source>
</reference>
<reference key="5">
    <citation type="journal article" date="2013" name="Appl. Environ. Microbiol.">
        <title>Overexpression of fetA (ybbL) and fetB (ybbM), encoding an iron exporter, enhances resistance to oxidative stress in Escherichia coli.</title>
        <authorList>
            <person name="Nicolaou S.A."/>
            <person name="Fast A.G."/>
            <person name="Nakamaru-Ogiso E."/>
            <person name="Papoutsakis E.T."/>
        </authorList>
    </citation>
    <scope>FUNCTION</scope>
    <scope>SUBUNIT</scope>
    <scope>SUBCELLULAR LOCATION</scope>
    <scope>TOPOLOGY</scope>
    <scope>DISRUPTION PHENOTYPE</scope>
    <scope>GENE NAME</scope>
    <source>
        <strain>K12 / MG1655 / ATCC 47076</strain>
    </source>
</reference>
<gene>
    <name type="primary">fetB</name>
    <name type="synonym">ybbM</name>
    <name type="ordered locus">b0491</name>
    <name type="ordered locus">JW5066</name>
</gene>
<protein>
    <recommendedName>
        <fullName>Probable iron export permease protein FetB</fullName>
    </recommendedName>
</protein>
<sequence length="259" mass="28165">MNSHNITNESLALALMLVVVAILISHKEKLALEKDILWSVGRAIIQLIIVGYVLKYIFSVDDASLTLLMVLFICFNAAWNAQKRSKYIAKAFISSFIAITVGAGITLAVLILSGSIEFIPMQVIPIAGMIAGNAMVAVGLCYNNLGQRVISEQQQIQEKLSLGATPKQASAILIRDSIRAALIPTVDSAKTVGLVSLPGMMSGLIFAGIDPVKAIKYQIMVTFMLLSTASLSTIIACYLTYRKFYNSRHQLVVTQLKKK</sequence>
<keyword id="KW-0997">Cell inner membrane</keyword>
<keyword id="KW-1003">Cell membrane</keyword>
<keyword id="KW-0406">Ion transport</keyword>
<keyword id="KW-0408">Iron</keyword>
<keyword id="KW-0410">Iron transport</keyword>
<keyword id="KW-0472">Membrane</keyword>
<keyword id="KW-1185">Reference proteome</keyword>
<keyword id="KW-0812">Transmembrane</keyword>
<keyword id="KW-1133">Transmembrane helix</keyword>
<keyword id="KW-0813">Transport</keyword>
<name>FETB_ECOLI</name>
<evidence type="ECO:0000250" key="1"/>
<evidence type="ECO:0000255" key="2"/>
<evidence type="ECO:0000269" key="3">
    <source>
    </source>
</evidence>
<evidence type="ECO:0000305" key="4"/>
<feature type="chain" id="PRO_0000217858" description="Probable iron export permease protein FetB">
    <location>
        <begin position="1"/>
        <end position="259"/>
    </location>
</feature>
<feature type="topological domain" description="Periplasmic" evidence="2">
    <location>
        <begin position="1"/>
        <end position="5"/>
    </location>
</feature>
<feature type="transmembrane region" description="Helical" evidence="2">
    <location>
        <begin position="6"/>
        <end position="26"/>
    </location>
</feature>
<feature type="topological domain" description="Cytoplasmic" evidence="2">
    <location>
        <begin position="27"/>
        <end position="35"/>
    </location>
</feature>
<feature type="transmembrane region" description="Helical" evidence="2">
    <location>
        <begin position="36"/>
        <end position="56"/>
    </location>
</feature>
<feature type="transmembrane region" description="Helical" evidence="2">
    <location>
        <begin position="57"/>
        <end position="77"/>
    </location>
</feature>
<feature type="topological domain" description="Cytoplasmic" evidence="2">
    <location>
        <begin position="78"/>
        <end position="91"/>
    </location>
</feature>
<feature type="transmembrane region" description="Helical" evidence="2">
    <location>
        <begin position="92"/>
        <end position="112"/>
    </location>
</feature>
<feature type="topological domain" description="Periplasmic" evidence="2">
    <location>
        <begin position="113"/>
        <end position="117"/>
    </location>
</feature>
<feature type="transmembrane region" description="Helical" evidence="2">
    <location>
        <begin position="118"/>
        <end position="138"/>
    </location>
</feature>
<feature type="topological domain" description="Cytoplasmic" evidence="2">
    <location>
        <begin position="139"/>
        <end position="191"/>
    </location>
</feature>
<feature type="transmembrane region" description="Helical" evidence="2">
    <location>
        <begin position="192"/>
        <end position="212"/>
    </location>
</feature>
<feature type="topological domain" description="Periplasmic" evidence="2">
    <location>
        <begin position="213"/>
        <end position="218"/>
    </location>
</feature>
<feature type="transmembrane region" description="Helical" evidence="2">
    <location>
        <begin position="219"/>
        <end position="239"/>
    </location>
</feature>
<feature type="topological domain" description="Cytoplasmic" evidence="2">
    <location>
        <begin position="240"/>
        <end position="259"/>
    </location>
</feature>
<proteinExistence type="evidence at protein level"/>
<comment type="function">
    <text evidence="3">Part of the ABC transporter complex FetAB, which is probably involved in iron export and enhances resistance to H(2)O(2)-mediated oxidative stress. Probably responsible for the translocation of the substrate across the membrane.</text>
</comment>
<comment type="subunit">
    <text evidence="1">The complex is composed of two ATP-binding proteins (FetA) and two transmembrane proteins (FetB).</text>
</comment>
<comment type="subcellular location">
    <subcellularLocation>
        <location evidence="3">Cell inner membrane</location>
        <topology evidence="3">Multi-pass membrane protein</topology>
    </subcellularLocation>
</comment>
<comment type="disruption phenotype">
    <text evidence="3">Mutant exhibits increased sensitivity to H(2)O(2) stress.</text>
</comment>
<comment type="similarity">
    <text evidence="4">Belongs to the UPF0014 family.</text>
</comment>
<comment type="sequence caution" evidence="4">
    <conflict type="erroneous initiation">
        <sequence resource="EMBL-CDS" id="AAB40245"/>
    </conflict>
    <text>Extended N-terminus.</text>
</comment>
<accession>P77307</accession>
<accession>Q2MBT6</accession>
<organism>
    <name type="scientific">Escherichia coli (strain K12)</name>
    <dbReference type="NCBI Taxonomy" id="83333"/>
    <lineage>
        <taxon>Bacteria</taxon>
        <taxon>Pseudomonadati</taxon>
        <taxon>Pseudomonadota</taxon>
        <taxon>Gammaproteobacteria</taxon>
        <taxon>Enterobacterales</taxon>
        <taxon>Enterobacteriaceae</taxon>
        <taxon>Escherichia</taxon>
    </lineage>
</organism>